<sequence length="141" mass="15094">VLSPADKSNVKAAWGKVGGHAGDYGAEALERMFLSFPTTKTYFPHFDLSHGSAQVKGHGKKVADALTNAVAHVDDMPNALSALSDLHAHKLRVDPVNFKLLSHCLLVTLAAHHPADFTPAVHASLDKFLASVSTVLTSKYR</sequence>
<feature type="chain" id="PRO_0000052757" description="Hemoglobin subunit alpha">
    <location>
        <begin position="1"/>
        <end position="141"/>
    </location>
</feature>
<feature type="peptide" id="PRO_0000455943" description="Hemopressin" evidence="2">
    <location>
        <begin position="95"/>
        <end position="103"/>
    </location>
</feature>
<feature type="domain" description="Globin" evidence="4">
    <location>
        <begin position="1"/>
        <end position="141"/>
    </location>
</feature>
<feature type="binding site" evidence="4">
    <location>
        <position position="58"/>
    </location>
    <ligand>
        <name>O2</name>
        <dbReference type="ChEBI" id="CHEBI:15379"/>
    </ligand>
</feature>
<feature type="binding site" description="proximal binding residue" evidence="4">
    <location>
        <position position="87"/>
    </location>
    <ligand>
        <name>heme b</name>
        <dbReference type="ChEBI" id="CHEBI:60344"/>
    </ligand>
    <ligandPart>
        <name>Fe</name>
        <dbReference type="ChEBI" id="CHEBI:18248"/>
    </ligandPart>
</feature>
<feature type="modified residue" description="Phosphoserine" evidence="3">
    <location>
        <position position="3"/>
    </location>
</feature>
<feature type="modified residue" description="N6-succinyllysine" evidence="1">
    <location>
        <position position="7"/>
    </location>
</feature>
<feature type="modified residue" description="N6-succinyllysine" evidence="1">
    <location>
        <position position="11"/>
    </location>
</feature>
<feature type="modified residue" description="N6-acetyllysine; alternate" evidence="3">
    <location>
        <position position="16"/>
    </location>
</feature>
<feature type="modified residue" description="N6-succinyllysine; alternate" evidence="1">
    <location>
        <position position="16"/>
    </location>
</feature>
<feature type="modified residue" description="Phosphotyrosine" evidence="3">
    <location>
        <position position="24"/>
    </location>
</feature>
<feature type="modified residue" description="Phosphoserine" evidence="3">
    <location>
        <position position="35"/>
    </location>
</feature>
<feature type="modified residue" description="N6-succinyllysine" evidence="1">
    <location>
        <position position="40"/>
    </location>
</feature>
<feature type="modified residue" description="Phosphoserine" evidence="3">
    <location>
        <position position="49"/>
    </location>
</feature>
<feature type="modified residue" description="Phosphoserine" evidence="1">
    <location>
        <position position="102"/>
    </location>
</feature>
<feature type="modified residue" description="Phosphothreonine" evidence="1">
    <location>
        <position position="108"/>
    </location>
</feature>
<feature type="modified residue" description="Phosphoserine" evidence="1">
    <location>
        <position position="124"/>
    </location>
</feature>
<feature type="modified residue" description="Phosphoserine" evidence="1">
    <location>
        <position position="131"/>
    </location>
</feature>
<feature type="modified residue" description="Phosphothreonine" evidence="1">
    <location>
        <position position="134"/>
    </location>
</feature>
<feature type="modified residue" description="Phosphothreonine" evidence="1">
    <location>
        <position position="137"/>
    </location>
</feature>
<feature type="modified residue" description="Phosphoserine" evidence="1">
    <location>
        <position position="138"/>
    </location>
</feature>
<dbReference type="PIR" id="B28865">
    <property type="entry name" value="B28865"/>
</dbReference>
<dbReference type="SMR" id="P67818"/>
<dbReference type="GO" id="GO:0072562">
    <property type="term" value="C:blood microparticle"/>
    <property type="evidence" value="ECO:0007669"/>
    <property type="project" value="TreeGrafter"/>
</dbReference>
<dbReference type="GO" id="GO:0031838">
    <property type="term" value="C:haptoglobin-hemoglobin complex"/>
    <property type="evidence" value="ECO:0007669"/>
    <property type="project" value="TreeGrafter"/>
</dbReference>
<dbReference type="GO" id="GO:0005833">
    <property type="term" value="C:hemoglobin complex"/>
    <property type="evidence" value="ECO:0007669"/>
    <property type="project" value="InterPro"/>
</dbReference>
<dbReference type="GO" id="GO:0031720">
    <property type="term" value="F:haptoglobin binding"/>
    <property type="evidence" value="ECO:0007669"/>
    <property type="project" value="TreeGrafter"/>
</dbReference>
<dbReference type="GO" id="GO:0020037">
    <property type="term" value="F:heme binding"/>
    <property type="evidence" value="ECO:0007669"/>
    <property type="project" value="InterPro"/>
</dbReference>
<dbReference type="GO" id="GO:0005506">
    <property type="term" value="F:iron ion binding"/>
    <property type="evidence" value="ECO:0007669"/>
    <property type="project" value="InterPro"/>
</dbReference>
<dbReference type="GO" id="GO:0043177">
    <property type="term" value="F:organic acid binding"/>
    <property type="evidence" value="ECO:0007669"/>
    <property type="project" value="TreeGrafter"/>
</dbReference>
<dbReference type="GO" id="GO:0019825">
    <property type="term" value="F:oxygen binding"/>
    <property type="evidence" value="ECO:0007669"/>
    <property type="project" value="InterPro"/>
</dbReference>
<dbReference type="GO" id="GO:0005344">
    <property type="term" value="F:oxygen carrier activity"/>
    <property type="evidence" value="ECO:0007669"/>
    <property type="project" value="UniProtKB-KW"/>
</dbReference>
<dbReference type="GO" id="GO:0004601">
    <property type="term" value="F:peroxidase activity"/>
    <property type="evidence" value="ECO:0007669"/>
    <property type="project" value="TreeGrafter"/>
</dbReference>
<dbReference type="GO" id="GO:0042744">
    <property type="term" value="P:hydrogen peroxide catabolic process"/>
    <property type="evidence" value="ECO:0007669"/>
    <property type="project" value="TreeGrafter"/>
</dbReference>
<dbReference type="CDD" id="cd08927">
    <property type="entry name" value="Hb-alpha-like"/>
    <property type="match status" value="1"/>
</dbReference>
<dbReference type="FunFam" id="1.10.490.10:FF:000002">
    <property type="entry name" value="Hemoglobin subunit alpha"/>
    <property type="match status" value="1"/>
</dbReference>
<dbReference type="Gene3D" id="1.10.490.10">
    <property type="entry name" value="Globins"/>
    <property type="match status" value="1"/>
</dbReference>
<dbReference type="InterPro" id="IPR000971">
    <property type="entry name" value="Globin"/>
</dbReference>
<dbReference type="InterPro" id="IPR009050">
    <property type="entry name" value="Globin-like_sf"/>
</dbReference>
<dbReference type="InterPro" id="IPR012292">
    <property type="entry name" value="Globin/Proto"/>
</dbReference>
<dbReference type="InterPro" id="IPR002338">
    <property type="entry name" value="Hemoglobin_a-typ"/>
</dbReference>
<dbReference type="InterPro" id="IPR050056">
    <property type="entry name" value="Hemoglobin_oxygen_transport"/>
</dbReference>
<dbReference type="InterPro" id="IPR002339">
    <property type="entry name" value="Hemoglobin_pi"/>
</dbReference>
<dbReference type="PANTHER" id="PTHR11442">
    <property type="entry name" value="HEMOGLOBIN FAMILY MEMBER"/>
    <property type="match status" value="1"/>
</dbReference>
<dbReference type="PANTHER" id="PTHR11442:SF48">
    <property type="entry name" value="HEMOGLOBIN SUBUNIT ALPHA"/>
    <property type="match status" value="1"/>
</dbReference>
<dbReference type="Pfam" id="PF00042">
    <property type="entry name" value="Globin"/>
    <property type="match status" value="1"/>
</dbReference>
<dbReference type="PRINTS" id="PR00612">
    <property type="entry name" value="ALPHAHAEM"/>
</dbReference>
<dbReference type="PRINTS" id="PR00815">
    <property type="entry name" value="PIHAEM"/>
</dbReference>
<dbReference type="SUPFAM" id="SSF46458">
    <property type="entry name" value="Globin-like"/>
    <property type="match status" value="1"/>
</dbReference>
<dbReference type="PROSITE" id="PS01033">
    <property type="entry name" value="GLOBIN"/>
    <property type="match status" value="1"/>
</dbReference>
<gene>
    <name type="primary">HBA</name>
</gene>
<reference key="1">
    <citation type="journal article" date="1984" name="J. Biochem.">
        <title>Primary structures of adult hemoglobins of silvery marmoset, Callithrix argentatus, and cotton-headed tamarin, Saguinus oedipus.</title>
        <authorList>
            <person name="Maita T."/>
            <person name="Hayashida M."/>
            <person name="Matsuda G."/>
        </authorList>
    </citation>
    <scope>PROTEIN SEQUENCE</scope>
</reference>
<comment type="function">
    <text>Involved in oxygen transport from the lung to the various peripheral tissues.</text>
</comment>
<comment type="function">
    <molecule>Hemopressin</molecule>
    <text evidence="2">Hemopressin acts as an antagonist peptide of the cannabinoid receptor CNR1. Hemopressin-binding efficiently blocks cannabinoid receptor CNR1 and subsequent signaling.</text>
</comment>
<comment type="subunit">
    <text>Heterotetramer of two alpha chains and two beta chains.</text>
</comment>
<comment type="tissue specificity">
    <text>Red blood cells.</text>
</comment>
<comment type="similarity">
    <text evidence="4">Belongs to the globin family.</text>
</comment>
<accession>P67818</accession>
<accession>P01927</accession>
<protein>
    <recommendedName>
        <fullName>Hemoglobin subunit alpha</fullName>
    </recommendedName>
    <alternativeName>
        <fullName>Alpha-globin</fullName>
    </alternativeName>
    <alternativeName>
        <fullName>Hemoglobin alpha chain</fullName>
    </alternativeName>
    <component>
        <recommendedName>
            <fullName evidence="2">Hemopressin</fullName>
        </recommendedName>
    </component>
</protein>
<proteinExistence type="evidence at protein level"/>
<keyword id="KW-0007">Acetylation</keyword>
<keyword id="KW-0903">Direct protein sequencing</keyword>
<keyword id="KW-0349">Heme</keyword>
<keyword id="KW-0408">Iron</keyword>
<keyword id="KW-0479">Metal-binding</keyword>
<keyword id="KW-0561">Oxygen transport</keyword>
<keyword id="KW-0597">Phosphoprotein</keyword>
<keyword id="KW-0813">Transport</keyword>
<organism>
    <name type="scientific">Saguinus oedipus</name>
    <name type="common">Cotton-top tamarin</name>
    <dbReference type="NCBI Taxonomy" id="9490"/>
    <lineage>
        <taxon>Eukaryota</taxon>
        <taxon>Metazoa</taxon>
        <taxon>Chordata</taxon>
        <taxon>Craniata</taxon>
        <taxon>Vertebrata</taxon>
        <taxon>Euteleostomi</taxon>
        <taxon>Mammalia</taxon>
        <taxon>Eutheria</taxon>
        <taxon>Euarchontoglires</taxon>
        <taxon>Primates</taxon>
        <taxon>Haplorrhini</taxon>
        <taxon>Platyrrhini</taxon>
        <taxon>Cebidae</taxon>
        <taxon>Callitrichinae</taxon>
        <taxon>Saguinus</taxon>
    </lineage>
</organism>
<evidence type="ECO:0000250" key="1">
    <source>
        <dbReference type="UniProtKB" id="P01942"/>
    </source>
</evidence>
<evidence type="ECO:0000250" key="2">
    <source>
        <dbReference type="UniProtKB" id="P01946"/>
    </source>
</evidence>
<evidence type="ECO:0000250" key="3">
    <source>
        <dbReference type="UniProtKB" id="P69905"/>
    </source>
</evidence>
<evidence type="ECO:0000255" key="4">
    <source>
        <dbReference type="PROSITE-ProRule" id="PRU00238"/>
    </source>
</evidence>
<name>HBA_SAGOE</name>